<name>GUAA_BRUME</name>
<evidence type="ECO:0000255" key="1">
    <source>
        <dbReference type="HAMAP-Rule" id="MF_00344"/>
    </source>
</evidence>
<feature type="chain" id="PRO_0000140103" description="GMP synthase [glutamine-hydrolyzing]">
    <location>
        <begin position="1"/>
        <end position="507"/>
    </location>
</feature>
<feature type="domain" description="Glutamine amidotransferase type-1" evidence="1">
    <location>
        <begin position="9"/>
        <end position="202"/>
    </location>
</feature>
<feature type="domain" description="GMPS ATP-PPase" evidence="1">
    <location>
        <begin position="203"/>
        <end position="395"/>
    </location>
</feature>
<feature type="active site" description="Nucleophile" evidence="1">
    <location>
        <position position="86"/>
    </location>
</feature>
<feature type="active site" evidence="1">
    <location>
        <position position="176"/>
    </location>
</feature>
<feature type="active site" evidence="1">
    <location>
        <position position="178"/>
    </location>
</feature>
<feature type="binding site" evidence="1">
    <location>
        <begin position="230"/>
        <end position="236"/>
    </location>
    <ligand>
        <name>ATP</name>
        <dbReference type="ChEBI" id="CHEBI:30616"/>
    </ligand>
</feature>
<protein>
    <recommendedName>
        <fullName evidence="1">GMP synthase [glutamine-hydrolyzing]</fullName>
        <ecNumber evidence="1">6.3.5.2</ecNumber>
    </recommendedName>
    <alternativeName>
        <fullName evidence="1">GMP synthetase</fullName>
    </alternativeName>
    <alternativeName>
        <fullName evidence="1">Glutamine amidotransferase</fullName>
    </alternativeName>
</protein>
<sequence length="507" mass="56084">MSTTAYPDTILIIDFGSQVTQLIARRVREANVYCEIVPFQSADEAFKRLQPKGVILSGSPHSTTDIGSPRAPQAIFDAGIPVLGICYGEQTMCAQLGGNVESGHDREFGRAFLDVQEDSPLFAGIWAKGTRHQVWMSHGDRVTSLPDGFTIIGTSPNAPYAVIADEKRKYYGVQFHPEVVHTPDGAKLLQNFVHRIVGVKPGWTMGAYREQAVEAIRKQVGSGKVICALSGGVDSSVAALLAHEAVGDQLTCILVDHGLMRKDEVQQVVEMFREHYNLPLILVDASDRFIGALEGESDPEKKRKTIGRLFIEVFEEEARKLGGADFLVQGTLYPDVIESVSFTGGPSVTIKSHHNVGGLPERMKMQLVEPLRELFKDEVRLLGKELGLPDSFIGRHPFPGPGLAIRCPGGVTREKLEILREADAIYLDEIRKAGLYDAIWQAFAVLLPVQDRGRDGGWPHLRIRLRLARGDFGGRHDGGFLPLRHEFPRQCGHPHHQRSPRHQPRCL</sequence>
<gene>
    <name evidence="1" type="primary">guaA</name>
    <name type="ordered locus">BMEII0887</name>
</gene>
<keyword id="KW-0067">ATP-binding</keyword>
<keyword id="KW-0315">Glutamine amidotransferase</keyword>
<keyword id="KW-0332">GMP biosynthesis</keyword>
<keyword id="KW-0436">Ligase</keyword>
<keyword id="KW-0547">Nucleotide-binding</keyword>
<keyword id="KW-0658">Purine biosynthesis</keyword>
<comment type="function">
    <text evidence="1">Catalyzes the synthesis of GMP from XMP.</text>
</comment>
<comment type="catalytic activity">
    <reaction evidence="1">
        <text>XMP + L-glutamine + ATP + H2O = GMP + L-glutamate + AMP + diphosphate + 2 H(+)</text>
        <dbReference type="Rhea" id="RHEA:11680"/>
        <dbReference type="ChEBI" id="CHEBI:15377"/>
        <dbReference type="ChEBI" id="CHEBI:15378"/>
        <dbReference type="ChEBI" id="CHEBI:29985"/>
        <dbReference type="ChEBI" id="CHEBI:30616"/>
        <dbReference type="ChEBI" id="CHEBI:33019"/>
        <dbReference type="ChEBI" id="CHEBI:57464"/>
        <dbReference type="ChEBI" id="CHEBI:58115"/>
        <dbReference type="ChEBI" id="CHEBI:58359"/>
        <dbReference type="ChEBI" id="CHEBI:456215"/>
        <dbReference type="EC" id="6.3.5.2"/>
    </reaction>
</comment>
<comment type="pathway">
    <text evidence="1">Purine metabolism; GMP biosynthesis; GMP from XMP (L-Gln route): step 1/1.</text>
</comment>
<comment type="subunit">
    <text evidence="1">Homodimer.</text>
</comment>
<proteinExistence type="inferred from homology"/>
<dbReference type="EC" id="6.3.5.2" evidence="1"/>
<dbReference type="EMBL" id="AE008918">
    <property type="protein sequence ID" value="AAL54129.1"/>
    <property type="molecule type" value="Genomic_DNA"/>
</dbReference>
<dbReference type="PIR" id="AF3620">
    <property type="entry name" value="AF3620"/>
</dbReference>
<dbReference type="SMR" id="Q8YBL2"/>
<dbReference type="MEROPS" id="C26.957"/>
<dbReference type="KEGG" id="bme:BMEII0887"/>
<dbReference type="eggNOG" id="COG0518">
    <property type="taxonomic scope" value="Bacteria"/>
</dbReference>
<dbReference type="eggNOG" id="COG0519">
    <property type="taxonomic scope" value="Bacteria"/>
</dbReference>
<dbReference type="PhylomeDB" id="Q8YBL2"/>
<dbReference type="UniPathway" id="UPA00189">
    <property type="reaction ID" value="UER00296"/>
</dbReference>
<dbReference type="Proteomes" id="UP000000419">
    <property type="component" value="Chromosome II"/>
</dbReference>
<dbReference type="GO" id="GO:0005829">
    <property type="term" value="C:cytosol"/>
    <property type="evidence" value="ECO:0007669"/>
    <property type="project" value="TreeGrafter"/>
</dbReference>
<dbReference type="GO" id="GO:0005524">
    <property type="term" value="F:ATP binding"/>
    <property type="evidence" value="ECO:0007669"/>
    <property type="project" value="UniProtKB-UniRule"/>
</dbReference>
<dbReference type="GO" id="GO:0003921">
    <property type="term" value="F:GMP synthase activity"/>
    <property type="evidence" value="ECO:0007669"/>
    <property type="project" value="InterPro"/>
</dbReference>
<dbReference type="CDD" id="cd01742">
    <property type="entry name" value="GATase1_GMP_Synthase"/>
    <property type="match status" value="1"/>
</dbReference>
<dbReference type="CDD" id="cd01997">
    <property type="entry name" value="GMP_synthase_C"/>
    <property type="match status" value="1"/>
</dbReference>
<dbReference type="FunFam" id="3.40.50.620:FF:000001">
    <property type="entry name" value="GMP synthase [glutamine-hydrolyzing]"/>
    <property type="match status" value="1"/>
</dbReference>
<dbReference type="FunFam" id="3.40.50.880:FF:000001">
    <property type="entry name" value="GMP synthase [glutamine-hydrolyzing]"/>
    <property type="match status" value="1"/>
</dbReference>
<dbReference type="Gene3D" id="3.30.300.10">
    <property type="match status" value="1"/>
</dbReference>
<dbReference type="Gene3D" id="3.40.50.880">
    <property type="match status" value="1"/>
</dbReference>
<dbReference type="Gene3D" id="3.40.50.620">
    <property type="entry name" value="HUPs"/>
    <property type="match status" value="1"/>
</dbReference>
<dbReference type="HAMAP" id="MF_00344">
    <property type="entry name" value="GMP_synthase"/>
    <property type="match status" value="1"/>
</dbReference>
<dbReference type="InterPro" id="IPR029062">
    <property type="entry name" value="Class_I_gatase-like"/>
</dbReference>
<dbReference type="InterPro" id="IPR017926">
    <property type="entry name" value="GATASE"/>
</dbReference>
<dbReference type="InterPro" id="IPR001674">
    <property type="entry name" value="GMP_synth_C"/>
</dbReference>
<dbReference type="InterPro" id="IPR004739">
    <property type="entry name" value="GMP_synth_GATase"/>
</dbReference>
<dbReference type="InterPro" id="IPR022955">
    <property type="entry name" value="GMP_synthase"/>
</dbReference>
<dbReference type="InterPro" id="IPR025777">
    <property type="entry name" value="GMPS_ATP_PPase_dom"/>
</dbReference>
<dbReference type="InterPro" id="IPR022310">
    <property type="entry name" value="NAD/GMP_synthase"/>
</dbReference>
<dbReference type="InterPro" id="IPR014729">
    <property type="entry name" value="Rossmann-like_a/b/a_fold"/>
</dbReference>
<dbReference type="NCBIfam" id="TIGR00884">
    <property type="entry name" value="guaA_Cterm"/>
    <property type="match status" value="1"/>
</dbReference>
<dbReference type="NCBIfam" id="TIGR00888">
    <property type="entry name" value="guaA_Nterm"/>
    <property type="match status" value="1"/>
</dbReference>
<dbReference type="NCBIfam" id="NF000848">
    <property type="entry name" value="PRK00074.1"/>
    <property type="match status" value="1"/>
</dbReference>
<dbReference type="PANTHER" id="PTHR11922:SF2">
    <property type="entry name" value="GMP SYNTHASE [GLUTAMINE-HYDROLYZING]"/>
    <property type="match status" value="1"/>
</dbReference>
<dbReference type="PANTHER" id="PTHR11922">
    <property type="entry name" value="GMP SYNTHASE-RELATED"/>
    <property type="match status" value="1"/>
</dbReference>
<dbReference type="Pfam" id="PF00117">
    <property type="entry name" value="GATase"/>
    <property type="match status" value="1"/>
</dbReference>
<dbReference type="Pfam" id="PF02540">
    <property type="entry name" value="NAD_synthase"/>
    <property type="match status" value="1"/>
</dbReference>
<dbReference type="PRINTS" id="PR00097">
    <property type="entry name" value="ANTSNTHASEII"/>
</dbReference>
<dbReference type="PRINTS" id="PR00096">
    <property type="entry name" value="GATASE"/>
</dbReference>
<dbReference type="SUPFAM" id="SSF52402">
    <property type="entry name" value="Adenine nucleotide alpha hydrolases-like"/>
    <property type="match status" value="1"/>
</dbReference>
<dbReference type="SUPFAM" id="SSF52317">
    <property type="entry name" value="Class I glutamine amidotransferase-like"/>
    <property type="match status" value="1"/>
</dbReference>
<dbReference type="PROSITE" id="PS51273">
    <property type="entry name" value="GATASE_TYPE_1"/>
    <property type="match status" value="1"/>
</dbReference>
<dbReference type="PROSITE" id="PS51553">
    <property type="entry name" value="GMPS_ATP_PPASE"/>
    <property type="match status" value="1"/>
</dbReference>
<reference key="1">
    <citation type="journal article" date="2002" name="Proc. Natl. Acad. Sci. U.S.A.">
        <title>The genome sequence of the facultative intracellular pathogen Brucella melitensis.</title>
        <authorList>
            <person name="DelVecchio V.G."/>
            <person name="Kapatral V."/>
            <person name="Redkar R.J."/>
            <person name="Patra G."/>
            <person name="Mujer C."/>
            <person name="Los T."/>
            <person name="Ivanova N."/>
            <person name="Anderson I."/>
            <person name="Bhattacharyya A."/>
            <person name="Lykidis A."/>
            <person name="Reznik G."/>
            <person name="Jablonski L."/>
            <person name="Larsen N."/>
            <person name="D'Souza M."/>
            <person name="Bernal A."/>
            <person name="Mazur M."/>
            <person name="Goltsman E."/>
            <person name="Selkov E."/>
            <person name="Elzer P.H."/>
            <person name="Hagius S."/>
            <person name="O'Callaghan D."/>
            <person name="Letesson J.-J."/>
            <person name="Haselkorn R."/>
            <person name="Kyrpides N.C."/>
            <person name="Overbeek R."/>
        </authorList>
    </citation>
    <scope>NUCLEOTIDE SEQUENCE [LARGE SCALE GENOMIC DNA]</scope>
    <source>
        <strain>ATCC 23456 / CCUG 17765 / NCTC 10094 / 16M</strain>
    </source>
</reference>
<accession>Q8YBL2</accession>
<organism>
    <name type="scientific">Brucella melitensis biotype 1 (strain ATCC 23456 / CCUG 17765 / NCTC 10094 / 16M)</name>
    <dbReference type="NCBI Taxonomy" id="224914"/>
    <lineage>
        <taxon>Bacteria</taxon>
        <taxon>Pseudomonadati</taxon>
        <taxon>Pseudomonadota</taxon>
        <taxon>Alphaproteobacteria</taxon>
        <taxon>Hyphomicrobiales</taxon>
        <taxon>Brucellaceae</taxon>
        <taxon>Brucella/Ochrobactrum group</taxon>
        <taxon>Brucella</taxon>
    </lineage>
</organism>